<reference key="1">
    <citation type="journal article" date="2004" name="Genome Res.">
        <title>The status, quality, and expansion of the NIH full-length cDNA project: the Mammalian Gene Collection (MGC).</title>
        <authorList>
            <consortium name="The MGC Project Team"/>
        </authorList>
    </citation>
    <scope>NUCLEOTIDE SEQUENCE [LARGE SCALE MRNA]</scope>
    <source>
        <tissue>Pancreas</tissue>
    </source>
</reference>
<reference key="2">
    <citation type="journal article" date="2010" name="Cell">
        <title>A tissue-specific atlas of mouse protein phosphorylation and expression.</title>
        <authorList>
            <person name="Huttlin E.L."/>
            <person name="Jedrychowski M.P."/>
            <person name="Elias J.E."/>
            <person name="Goswami T."/>
            <person name="Rad R."/>
            <person name="Beausoleil S.A."/>
            <person name="Villen J."/>
            <person name="Haas W."/>
            <person name="Sowa M.E."/>
            <person name="Gygi S.P."/>
        </authorList>
    </citation>
    <scope>IDENTIFICATION BY MASS SPECTROMETRY [LARGE SCALE ANALYSIS]</scope>
    <source>
        <tissue>Pancreas</tissue>
    </source>
</reference>
<feature type="signal peptide" evidence="5">
    <location>
        <begin position="1"/>
        <end position="16"/>
    </location>
</feature>
<feature type="propeptide" id="PRO_0000280809" description="Activation peptide">
    <location>
        <begin position="17"/>
        <end position="112"/>
    </location>
</feature>
<feature type="chain" id="PRO_0000280810" description="Carboxypeptidase A2">
    <location>
        <begin position="113"/>
        <end position="417"/>
    </location>
</feature>
<feature type="domain" description="Peptidase M14" evidence="6">
    <location>
        <begin position="120"/>
        <end position="412"/>
    </location>
</feature>
<feature type="active site" description="Proton donor/acceptor" evidence="6">
    <location>
        <position position="378"/>
    </location>
</feature>
<feature type="binding site" evidence="1">
    <location>
        <begin position="177"/>
        <end position="180"/>
    </location>
    <ligand>
        <name>substrate</name>
    </ligand>
</feature>
<feature type="binding site" evidence="6">
    <location>
        <position position="177"/>
    </location>
    <ligand>
        <name>Zn(2+)</name>
        <dbReference type="ChEBI" id="CHEBI:29105"/>
        <note>catalytic</note>
    </ligand>
</feature>
<feature type="binding site" evidence="6">
    <location>
        <position position="180"/>
    </location>
    <ligand>
        <name>Zn(2+)</name>
        <dbReference type="ChEBI" id="CHEBI:29105"/>
        <note>catalytic</note>
    </ligand>
</feature>
<feature type="binding site" evidence="1">
    <location>
        <position position="235"/>
    </location>
    <ligand>
        <name>substrate</name>
    </ligand>
</feature>
<feature type="binding site" evidence="1">
    <location>
        <begin position="252"/>
        <end position="253"/>
    </location>
    <ligand>
        <name>substrate</name>
    </ligand>
</feature>
<feature type="binding site" evidence="6">
    <location>
        <position position="304"/>
    </location>
    <ligand>
        <name>Zn(2+)</name>
        <dbReference type="ChEBI" id="CHEBI:29105"/>
        <note>catalytic</note>
    </ligand>
</feature>
<feature type="binding site" evidence="1">
    <location>
        <begin position="305"/>
        <end position="306"/>
    </location>
    <ligand>
        <name>substrate</name>
    </ligand>
</feature>
<feature type="binding site" evidence="1">
    <location>
        <position position="356"/>
    </location>
    <ligand>
        <name>substrate</name>
    </ligand>
</feature>
<feature type="disulfide bond" evidence="3">
    <location>
        <begin position="246"/>
        <end position="269"/>
    </location>
</feature>
<feature type="disulfide bond" evidence="2">
    <location>
        <begin position="318"/>
        <end position="352"/>
    </location>
</feature>
<evidence type="ECO:0000250" key="1">
    <source>
        <dbReference type="UniProtKB" id="P00730"/>
    </source>
</evidence>
<evidence type="ECO:0000250" key="2">
    <source>
        <dbReference type="UniProtKB" id="P48052"/>
    </source>
</evidence>
<evidence type="ECO:0000250" key="3">
    <source>
        <dbReference type="UniProtKB" id="Q96IY4"/>
    </source>
</evidence>
<evidence type="ECO:0000250" key="4">
    <source>
        <dbReference type="UniProtKB" id="Q9UI42"/>
    </source>
</evidence>
<evidence type="ECO:0000255" key="5"/>
<evidence type="ECO:0000255" key="6">
    <source>
        <dbReference type="PROSITE-ProRule" id="PRU01379"/>
    </source>
</evidence>
<evidence type="ECO:0000305" key="7"/>
<sequence>MRLTPLLVALFGYIYCQETFVGDQVLEVIPNDEEQIKTLLQLEAEEHLELDFWKSPSVPRQTVHVRVPFASIQDVKVFLESQGITYSIMIEDVQVLLDQEREEMLFNQQRERGTNFNFGAYHTLEEIYQEMDNLVAENPGLVSKVNIGSSFENRPMNVLKFSTGGDKPAIWLDAGIHAREWVTQATALWTANKIASDYGTDPAITSLLNTLDVFLLPVTNPDGYVFSQTSNRMWRKTRSKRSGSFCVGVDPNRNWDANFGGPGASSNPCSDSYHGPSPNSEVEVKSIVDFIKSHGKVKAFITLHSYSQLLMFPYGYKCAKPDDFNELDEVAQRAAQSLKRLHGTSYKVGPICSVIYQASGGSIDWAYDLGIKYSFAFELRDTGYYGFLLPAKQILPTAEETWLGLKTIMEHVRDHPY</sequence>
<protein>
    <recommendedName>
        <fullName>Carboxypeptidase A2</fullName>
        <ecNumber evidence="2">3.4.17.15</ecNumber>
    </recommendedName>
</protein>
<dbReference type="EC" id="3.4.17.15" evidence="2"/>
<dbReference type="EMBL" id="BC094929">
    <property type="protein sequence ID" value="AAH94929.1"/>
    <property type="molecule type" value="mRNA"/>
</dbReference>
<dbReference type="CCDS" id="CCDS19974.1"/>
<dbReference type="RefSeq" id="NP_001019869.1">
    <property type="nucleotide sequence ID" value="NM_001024698.3"/>
</dbReference>
<dbReference type="SMR" id="Q504N0"/>
<dbReference type="BioGRID" id="231284">
    <property type="interactions" value="1"/>
</dbReference>
<dbReference type="FunCoup" id="Q504N0">
    <property type="interactions" value="171"/>
</dbReference>
<dbReference type="STRING" id="10090.ENSMUSP00000093771"/>
<dbReference type="MEROPS" id="M14.002"/>
<dbReference type="iPTMnet" id="Q504N0"/>
<dbReference type="PhosphoSitePlus" id="Q504N0"/>
<dbReference type="PaxDb" id="10090-ENSMUSP00000093771"/>
<dbReference type="ProteomicsDB" id="265282"/>
<dbReference type="Antibodypedia" id="17945">
    <property type="antibodies" value="546 antibodies from 32 providers"/>
</dbReference>
<dbReference type="DNASU" id="232680"/>
<dbReference type="Ensembl" id="ENSMUST00000096066.5">
    <property type="protein sequence ID" value="ENSMUSP00000093771.5"/>
    <property type="gene ID" value="ENSMUSG00000071553.11"/>
</dbReference>
<dbReference type="GeneID" id="232680"/>
<dbReference type="KEGG" id="mmu:232680"/>
<dbReference type="UCSC" id="uc009bfn.1">
    <property type="organism name" value="mouse"/>
</dbReference>
<dbReference type="AGR" id="MGI:3617840"/>
<dbReference type="CTD" id="1358"/>
<dbReference type="MGI" id="MGI:3617840">
    <property type="gene designation" value="Cpa2"/>
</dbReference>
<dbReference type="VEuPathDB" id="HostDB:ENSMUSG00000071553"/>
<dbReference type="eggNOG" id="KOG2650">
    <property type="taxonomic scope" value="Eukaryota"/>
</dbReference>
<dbReference type="GeneTree" id="ENSGT00940000160121"/>
<dbReference type="HOGENOM" id="CLU_019326_0_0_1"/>
<dbReference type="InParanoid" id="Q504N0"/>
<dbReference type="OMA" id="WSYDSGI"/>
<dbReference type="OrthoDB" id="3626597at2759"/>
<dbReference type="PhylomeDB" id="Q504N0"/>
<dbReference type="TreeFam" id="TF317197"/>
<dbReference type="BioGRID-ORCS" id="232680">
    <property type="hits" value="1 hit in 78 CRISPR screens"/>
</dbReference>
<dbReference type="ChiTaRS" id="Cpa2">
    <property type="organism name" value="mouse"/>
</dbReference>
<dbReference type="PRO" id="PR:Q504N0"/>
<dbReference type="Proteomes" id="UP000000589">
    <property type="component" value="Chromosome 6"/>
</dbReference>
<dbReference type="RNAct" id="Q504N0">
    <property type="molecule type" value="protein"/>
</dbReference>
<dbReference type="Bgee" id="ENSMUSG00000071553">
    <property type="expression patterns" value="Expressed in pyloric antrum and 125 other cell types or tissues"/>
</dbReference>
<dbReference type="GO" id="GO:0005576">
    <property type="term" value="C:extracellular region"/>
    <property type="evidence" value="ECO:0007669"/>
    <property type="project" value="UniProtKB-SubCell"/>
</dbReference>
<dbReference type="GO" id="GO:0004181">
    <property type="term" value="F:metallocarboxypeptidase activity"/>
    <property type="evidence" value="ECO:0000250"/>
    <property type="project" value="UniProtKB"/>
</dbReference>
<dbReference type="GO" id="GO:0008270">
    <property type="term" value="F:zinc ion binding"/>
    <property type="evidence" value="ECO:0007669"/>
    <property type="project" value="Ensembl"/>
</dbReference>
<dbReference type="GO" id="GO:0006508">
    <property type="term" value="P:proteolysis"/>
    <property type="evidence" value="ECO:0007669"/>
    <property type="project" value="UniProtKB-KW"/>
</dbReference>
<dbReference type="CDD" id="cd03870">
    <property type="entry name" value="M14_CPA"/>
    <property type="match status" value="1"/>
</dbReference>
<dbReference type="FunFam" id="3.40.630.10:FF:000132">
    <property type="entry name" value="Carboxypeptidase A1"/>
    <property type="match status" value="1"/>
</dbReference>
<dbReference type="FunFam" id="3.30.70.340:FF:000001">
    <property type="entry name" value="Carboxypeptidase A5"/>
    <property type="match status" value="1"/>
</dbReference>
<dbReference type="Gene3D" id="3.30.70.340">
    <property type="entry name" value="Metallocarboxypeptidase-like"/>
    <property type="match status" value="1"/>
</dbReference>
<dbReference type="Gene3D" id="3.40.630.10">
    <property type="entry name" value="Zn peptidases"/>
    <property type="match status" value="1"/>
</dbReference>
<dbReference type="InterPro" id="IPR034248">
    <property type="entry name" value="CPA_M14_CPD"/>
</dbReference>
<dbReference type="InterPro" id="IPR036990">
    <property type="entry name" value="M14A-like_propep"/>
</dbReference>
<dbReference type="InterPro" id="IPR003146">
    <property type="entry name" value="M14A_act_pep"/>
</dbReference>
<dbReference type="InterPro" id="IPR000834">
    <property type="entry name" value="Peptidase_M14"/>
</dbReference>
<dbReference type="PANTHER" id="PTHR11705:SF71">
    <property type="entry name" value="CARBOXYPEPTIDASE A2"/>
    <property type="match status" value="1"/>
</dbReference>
<dbReference type="PANTHER" id="PTHR11705">
    <property type="entry name" value="PROTEASE FAMILY M14 CARBOXYPEPTIDASE A,B"/>
    <property type="match status" value="1"/>
</dbReference>
<dbReference type="Pfam" id="PF00246">
    <property type="entry name" value="Peptidase_M14"/>
    <property type="match status" value="1"/>
</dbReference>
<dbReference type="Pfam" id="PF02244">
    <property type="entry name" value="Propep_M14"/>
    <property type="match status" value="1"/>
</dbReference>
<dbReference type="PRINTS" id="PR00765">
    <property type="entry name" value="CRBOXYPTASEA"/>
</dbReference>
<dbReference type="SMART" id="SM00631">
    <property type="entry name" value="Zn_pept"/>
    <property type="match status" value="1"/>
</dbReference>
<dbReference type="SUPFAM" id="SSF54897">
    <property type="entry name" value="Protease propeptides/inhibitors"/>
    <property type="match status" value="1"/>
</dbReference>
<dbReference type="SUPFAM" id="SSF53187">
    <property type="entry name" value="Zn-dependent exopeptidases"/>
    <property type="match status" value="1"/>
</dbReference>
<dbReference type="PROSITE" id="PS00132">
    <property type="entry name" value="CARBOXYPEPT_ZN_1"/>
    <property type="match status" value="1"/>
</dbReference>
<dbReference type="PROSITE" id="PS00133">
    <property type="entry name" value="CARBOXYPEPT_ZN_2"/>
    <property type="match status" value="1"/>
</dbReference>
<dbReference type="PROSITE" id="PS52035">
    <property type="entry name" value="PEPTIDASE_M14"/>
    <property type="match status" value="1"/>
</dbReference>
<keyword id="KW-0121">Carboxypeptidase</keyword>
<keyword id="KW-1015">Disulfide bond</keyword>
<keyword id="KW-0378">Hydrolase</keyword>
<keyword id="KW-0479">Metal-binding</keyword>
<keyword id="KW-0482">Metalloprotease</keyword>
<keyword id="KW-0645">Protease</keyword>
<keyword id="KW-1185">Reference proteome</keyword>
<keyword id="KW-0964">Secreted</keyword>
<keyword id="KW-0732">Signal</keyword>
<keyword id="KW-0862">Zinc</keyword>
<keyword id="KW-0865">Zymogen</keyword>
<gene>
    <name type="primary">Cpa2</name>
</gene>
<name>CBPA2_MOUSE</name>
<proteinExistence type="evidence at protein level"/>
<organism>
    <name type="scientific">Mus musculus</name>
    <name type="common">Mouse</name>
    <dbReference type="NCBI Taxonomy" id="10090"/>
    <lineage>
        <taxon>Eukaryota</taxon>
        <taxon>Metazoa</taxon>
        <taxon>Chordata</taxon>
        <taxon>Craniata</taxon>
        <taxon>Vertebrata</taxon>
        <taxon>Euteleostomi</taxon>
        <taxon>Mammalia</taxon>
        <taxon>Eutheria</taxon>
        <taxon>Euarchontoglires</taxon>
        <taxon>Glires</taxon>
        <taxon>Rodentia</taxon>
        <taxon>Myomorpha</taxon>
        <taxon>Muroidea</taxon>
        <taxon>Muridae</taxon>
        <taxon>Murinae</taxon>
        <taxon>Mus</taxon>
        <taxon>Mus</taxon>
    </lineage>
</organism>
<comment type="function">
    <text evidence="2">Carboxypeptidase that catalyzes the release of a C-terminal amino acid, with a preference for large aromatic C-terminal residues.</text>
</comment>
<comment type="catalytic activity">
    <reaction evidence="2">
        <text>Similar to that of carboxypeptidase A (EC 3.4.17.1), but with a preference for bulkier C-terminal residues.</text>
        <dbReference type="EC" id="3.4.17.15"/>
    </reaction>
</comment>
<comment type="cofactor">
    <cofactor evidence="2">
        <name>Zn(2+)</name>
        <dbReference type="ChEBI" id="CHEBI:29105"/>
    </cofactor>
    <text evidence="2">Binds 1 zinc ion per subunit.</text>
</comment>
<comment type="subcellular location">
    <subcellularLocation>
        <location evidence="4">Secreted</location>
    </subcellularLocation>
</comment>
<comment type="similarity">
    <text evidence="7">Belongs to the peptidase M14 family.</text>
</comment>
<accession>Q504N0</accession>